<gene>
    <name evidence="1" type="primary">whiA</name>
    <name type="ordered locus">FRAAL4590</name>
</gene>
<feature type="chain" id="PRO_0000376484" description="Probable cell division protein WhiA">
    <location>
        <begin position="1"/>
        <end position="325"/>
    </location>
</feature>
<feature type="DNA-binding region" description="H-T-H motif" evidence="1">
    <location>
        <begin position="273"/>
        <end position="306"/>
    </location>
</feature>
<comment type="function">
    <text evidence="1">Involved in cell division and chromosome segregation.</text>
</comment>
<comment type="similarity">
    <text evidence="1">Belongs to the WhiA family.</text>
</comment>
<comment type="sequence caution" evidence="2">
    <conflict type="erroneous initiation">
        <sequence resource="EMBL-CDS" id="CAJ63232"/>
    </conflict>
</comment>
<protein>
    <recommendedName>
        <fullName evidence="1">Probable cell division protein WhiA</fullName>
    </recommendedName>
</protein>
<keyword id="KW-0131">Cell cycle</keyword>
<keyword id="KW-0132">Cell division</keyword>
<keyword id="KW-0238">DNA-binding</keyword>
<keyword id="KW-1185">Reference proteome</keyword>
<evidence type="ECO:0000255" key="1">
    <source>
        <dbReference type="HAMAP-Rule" id="MF_01420"/>
    </source>
</evidence>
<evidence type="ECO:0000305" key="2"/>
<name>WHIA_FRAAA</name>
<organism>
    <name type="scientific">Frankia alni (strain DSM 45986 / CECT 9034 / ACN14a)</name>
    <dbReference type="NCBI Taxonomy" id="326424"/>
    <lineage>
        <taxon>Bacteria</taxon>
        <taxon>Bacillati</taxon>
        <taxon>Actinomycetota</taxon>
        <taxon>Actinomycetes</taxon>
        <taxon>Frankiales</taxon>
        <taxon>Frankiaceae</taxon>
        <taxon>Frankia</taxon>
    </lineage>
</organism>
<accession>Q0RH03</accession>
<dbReference type="EMBL" id="CT573213">
    <property type="protein sequence ID" value="CAJ63232.1"/>
    <property type="status" value="ALT_INIT"/>
    <property type="molecule type" value="Genomic_DNA"/>
</dbReference>
<dbReference type="SMR" id="Q0RH03"/>
<dbReference type="STRING" id="326424.FRAAL4590"/>
<dbReference type="KEGG" id="fal:FRAAL4590"/>
<dbReference type="eggNOG" id="COG1481">
    <property type="taxonomic scope" value="Bacteria"/>
</dbReference>
<dbReference type="HOGENOM" id="CLU_053282_0_0_11"/>
<dbReference type="Proteomes" id="UP000000657">
    <property type="component" value="Chromosome"/>
</dbReference>
<dbReference type="GO" id="GO:0003677">
    <property type="term" value="F:DNA binding"/>
    <property type="evidence" value="ECO:0007669"/>
    <property type="project" value="UniProtKB-UniRule"/>
</dbReference>
<dbReference type="GO" id="GO:0051301">
    <property type="term" value="P:cell division"/>
    <property type="evidence" value="ECO:0007669"/>
    <property type="project" value="UniProtKB-UniRule"/>
</dbReference>
<dbReference type="GO" id="GO:0043937">
    <property type="term" value="P:regulation of sporulation"/>
    <property type="evidence" value="ECO:0007669"/>
    <property type="project" value="InterPro"/>
</dbReference>
<dbReference type="FunFam" id="3.10.28.10:FF:000001">
    <property type="entry name" value="Probable cell division protein WhiA"/>
    <property type="match status" value="1"/>
</dbReference>
<dbReference type="Gene3D" id="3.10.28.10">
    <property type="entry name" value="Homing endonucleases"/>
    <property type="match status" value="1"/>
</dbReference>
<dbReference type="HAMAP" id="MF_01420">
    <property type="entry name" value="HTH_type_WhiA"/>
    <property type="match status" value="1"/>
</dbReference>
<dbReference type="InterPro" id="IPR027434">
    <property type="entry name" value="Homing_endonucl"/>
</dbReference>
<dbReference type="InterPro" id="IPR018478">
    <property type="entry name" value="Sporu_reg_WhiA_N_dom"/>
</dbReference>
<dbReference type="InterPro" id="IPR003802">
    <property type="entry name" value="Sporulation_regulator_WhiA"/>
</dbReference>
<dbReference type="InterPro" id="IPR023054">
    <property type="entry name" value="Sporulation_regulator_WhiA_C"/>
</dbReference>
<dbReference type="InterPro" id="IPR039518">
    <property type="entry name" value="WhiA_LAGLIDADG_dom"/>
</dbReference>
<dbReference type="NCBIfam" id="TIGR00647">
    <property type="entry name" value="DNA_bind_WhiA"/>
    <property type="match status" value="1"/>
</dbReference>
<dbReference type="PANTHER" id="PTHR37307">
    <property type="entry name" value="CELL DIVISION PROTEIN WHIA-RELATED"/>
    <property type="match status" value="1"/>
</dbReference>
<dbReference type="PANTHER" id="PTHR37307:SF1">
    <property type="entry name" value="CELL DIVISION PROTEIN WHIA-RELATED"/>
    <property type="match status" value="1"/>
</dbReference>
<dbReference type="Pfam" id="PF02650">
    <property type="entry name" value="HTH_WhiA"/>
    <property type="match status" value="1"/>
</dbReference>
<dbReference type="Pfam" id="PF14527">
    <property type="entry name" value="LAGLIDADG_WhiA"/>
    <property type="match status" value="1"/>
</dbReference>
<dbReference type="Pfam" id="PF10298">
    <property type="entry name" value="WhiA_N"/>
    <property type="match status" value="1"/>
</dbReference>
<proteinExistence type="inferred from homology"/>
<reference key="1">
    <citation type="journal article" date="2007" name="Genome Res.">
        <title>Genome characteristics of facultatively symbiotic Frankia sp. strains reflect host range and host plant biogeography.</title>
        <authorList>
            <person name="Normand P."/>
            <person name="Lapierre P."/>
            <person name="Tisa L.S."/>
            <person name="Gogarten J.P."/>
            <person name="Alloisio N."/>
            <person name="Bagnarol E."/>
            <person name="Bassi C.A."/>
            <person name="Berry A.M."/>
            <person name="Bickhart D.M."/>
            <person name="Choisne N."/>
            <person name="Couloux A."/>
            <person name="Cournoyer B."/>
            <person name="Cruveiller S."/>
            <person name="Daubin V."/>
            <person name="Demange N."/>
            <person name="Francino M.P."/>
            <person name="Goltsman E."/>
            <person name="Huang Y."/>
            <person name="Kopp O.R."/>
            <person name="Labarre L."/>
            <person name="Lapidus A."/>
            <person name="Lavire C."/>
            <person name="Marechal J."/>
            <person name="Martinez M."/>
            <person name="Mastronunzio J.E."/>
            <person name="Mullin B.C."/>
            <person name="Niemann J."/>
            <person name="Pujic P."/>
            <person name="Rawnsley T."/>
            <person name="Rouy Z."/>
            <person name="Schenowitz C."/>
            <person name="Sellstedt A."/>
            <person name="Tavares F."/>
            <person name="Tomkins J.P."/>
            <person name="Vallenet D."/>
            <person name="Valverde C."/>
            <person name="Wall L.G."/>
            <person name="Wang Y."/>
            <person name="Medigue C."/>
            <person name="Benson D.R."/>
        </authorList>
    </citation>
    <scope>NUCLEOTIDE SEQUENCE [LARGE SCALE GENOMIC DNA]</scope>
    <source>
        <strain>DSM 45986 / CECT 9034 / ACN14a</strain>
    </source>
</reference>
<sequence>MTATVKDELSRLRVAKPCCRRAEMAALLRFGGGLHIVGGRIVVEAELDTGATARRLRREVAEVFGFPSTVAVLAAGGLRRSVRYIVRVERDGEQLARSTGLLDQRGRPVRGLPPQVVTGSACDAAAAWRGAFLAHGSLTEPGRSCSLEVTSPGPEAALALVGAARRLGVQAKSRDVRGVDRVVIRDGDAIGALLTKIGAHDSLMAWEERRMRREVRATANRLANFDDANLRRSARAAVAAGARVQAAMRILGDDAPEHLLAAGRLRLEHAQASLEELGALADPPLTKDAVAGRIRRLLALADKRANALGIPNTEASVSPDLLENA</sequence>